<dbReference type="EMBL" id="BA000017">
    <property type="protein sequence ID" value="BAB58399.1"/>
    <property type="molecule type" value="Genomic_DNA"/>
</dbReference>
<dbReference type="RefSeq" id="WP_001140799.1">
    <property type="nucleotide sequence ID" value="NC_002758.2"/>
</dbReference>
<dbReference type="SMR" id="P66411"/>
<dbReference type="KEGG" id="sav:SAV2237"/>
<dbReference type="HOGENOM" id="CLU_139869_3_0_9"/>
<dbReference type="PhylomeDB" id="P66411"/>
<dbReference type="Proteomes" id="UP000002481">
    <property type="component" value="Chromosome"/>
</dbReference>
<dbReference type="GO" id="GO:0015935">
    <property type="term" value="C:small ribosomal subunit"/>
    <property type="evidence" value="ECO:0007669"/>
    <property type="project" value="TreeGrafter"/>
</dbReference>
<dbReference type="GO" id="GO:0019843">
    <property type="term" value="F:rRNA binding"/>
    <property type="evidence" value="ECO:0007669"/>
    <property type="project" value="UniProtKB-UniRule"/>
</dbReference>
<dbReference type="GO" id="GO:0003735">
    <property type="term" value="F:structural constituent of ribosome"/>
    <property type="evidence" value="ECO:0007669"/>
    <property type="project" value="InterPro"/>
</dbReference>
<dbReference type="GO" id="GO:0008270">
    <property type="term" value="F:zinc ion binding"/>
    <property type="evidence" value="ECO:0007669"/>
    <property type="project" value="UniProtKB-UniRule"/>
</dbReference>
<dbReference type="GO" id="GO:0006412">
    <property type="term" value="P:translation"/>
    <property type="evidence" value="ECO:0007669"/>
    <property type="project" value="UniProtKB-UniRule"/>
</dbReference>
<dbReference type="FunFam" id="4.10.830.10:FF:000001">
    <property type="entry name" value="30S ribosomal protein S14 type Z"/>
    <property type="match status" value="1"/>
</dbReference>
<dbReference type="Gene3D" id="4.10.830.10">
    <property type="entry name" value="30s Ribosomal Protein S14, Chain N"/>
    <property type="match status" value="1"/>
</dbReference>
<dbReference type="HAMAP" id="MF_01364_B">
    <property type="entry name" value="Ribosomal_uS14_2_B"/>
    <property type="match status" value="1"/>
</dbReference>
<dbReference type="InterPro" id="IPR001209">
    <property type="entry name" value="Ribosomal_uS14"/>
</dbReference>
<dbReference type="InterPro" id="IPR023053">
    <property type="entry name" value="Ribosomal_uS14_bact"/>
</dbReference>
<dbReference type="InterPro" id="IPR018271">
    <property type="entry name" value="Ribosomal_uS14_CS"/>
</dbReference>
<dbReference type="InterPro" id="IPR043140">
    <property type="entry name" value="Ribosomal_uS14_sf"/>
</dbReference>
<dbReference type="NCBIfam" id="NF005974">
    <property type="entry name" value="PRK08061.1"/>
    <property type="match status" value="1"/>
</dbReference>
<dbReference type="PANTHER" id="PTHR19836">
    <property type="entry name" value="30S RIBOSOMAL PROTEIN S14"/>
    <property type="match status" value="1"/>
</dbReference>
<dbReference type="PANTHER" id="PTHR19836:SF26">
    <property type="entry name" value="SMALL RIBOSOMAL SUBUNIT PROTEIN US14B"/>
    <property type="match status" value="1"/>
</dbReference>
<dbReference type="Pfam" id="PF00253">
    <property type="entry name" value="Ribosomal_S14"/>
    <property type="match status" value="1"/>
</dbReference>
<dbReference type="SUPFAM" id="SSF57716">
    <property type="entry name" value="Glucocorticoid receptor-like (DNA-binding domain)"/>
    <property type="match status" value="1"/>
</dbReference>
<dbReference type="PROSITE" id="PS00527">
    <property type="entry name" value="RIBOSOMAL_S14"/>
    <property type="match status" value="1"/>
</dbReference>
<accession>P66411</accession>
<accession>Q99S34</accession>
<keyword id="KW-0479">Metal-binding</keyword>
<keyword id="KW-0687">Ribonucleoprotein</keyword>
<keyword id="KW-0689">Ribosomal protein</keyword>
<keyword id="KW-0694">RNA-binding</keyword>
<keyword id="KW-0699">rRNA-binding</keyword>
<keyword id="KW-0862">Zinc</keyword>
<sequence>MAKTSMVAKQQKKQKYAVREYTRCERCGRPHSVYRKFKLCRICFRELAYKGQIPGVRKASW</sequence>
<protein>
    <recommendedName>
        <fullName evidence="1">Small ribosomal subunit protein uS14B</fullName>
    </recommendedName>
    <alternativeName>
        <fullName evidence="2">30S ribosomal protein S14 type Z</fullName>
    </alternativeName>
</protein>
<reference key="1">
    <citation type="journal article" date="2001" name="Lancet">
        <title>Whole genome sequencing of meticillin-resistant Staphylococcus aureus.</title>
        <authorList>
            <person name="Kuroda M."/>
            <person name="Ohta T."/>
            <person name="Uchiyama I."/>
            <person name="Baba T."/>
            <person name="Yuzawa H."/>
            <person name="Kobayashi I."/>
            <person name="Cui L."/>
            <person name="Oguchi A."/>
            <person name="Aoki K."/>
            <person name="Nagai Y."/>
            <person name="Lian J.-Q."/>
            <person name="Ito T."/>
            <person name="Kanamori M."/>
            <person name="Matsumaru H."/>
            <person name="Maruyama A."/>
            <person name="Murakami H."/>
            <person name="Hosoyama A."/>
            <person name="Mizutani-Ui Y."/>
            <person name="Takahashi N.K."/>
            <person name="Sawano T."/>
            <person name="Inoue R."/>
            <person name="Kaito C."/>
            <person name="Sekimizu K."/>
            <person name="Hirakawa H."/>
            <person name="Kuhara S."/>
            <person name="Goto S."/>
            <person name="Yabuzaki J."/>
            <person name="Kanehisa M."/>
            <person name="Yamashita A."/>
            <person name="Oshima K."/>
            <person name="Furuya K."/>
            <person name="Yoshino C."/>
            <person name="Shiba T."/>
            <person name="Hattori M."/>
            <person name="Ogasawara N."/>
            <person name="Hayashi H."/>
            <person name="Hiramatsu K."/>
        </authorList>
    </citation>
    <scope>NUCLEOTIDE SEQUENCE [LARGE SCALE GENOMIC DNA]</scope>
    <source>
        <strain>Mu50 / ATCC 700699</strain>
    </source>
</reference>
<organism>
    <name type="scientific">Staphylococcus aureus (strain Mu50 / ATCC 700699)</name>
    <dbReference type="NCBI Taxonomy" id="158878"/>
    <lineage>
        <taxon>Bacteria</taxon>
        <taxon>Bacillati</taxon>
        <taxon>Bacillota</taxon>
        <taxon>Bacilli</taxon>
        <taxon>Bacillales</taxon>
        <taxon>Staphylococcaceae</taxon>
        <taxon>Staphylococcus</taxon>
    </lineage>
</organism>
<evidence type="ECO:0000255" key="1">
    <source>
        <dbReference type="HAMAP-Rule" id="MF_01364"/>
    </source>
</evidence>
<evidence type="ECO:0000305" key="2"/>
<comment type="function">
    <text evidence="1">Binds 16S rRNA, required for the assembly of 30S particles and may also be responsible for determining the conformation of the 16S rRNA at the A site.</text>
</comment>
<comment type="cofactor">
    <cofactor evidence="1">
        <name>Zn(2+)</name>
        <dbReference type="ChEBI" id="CHEBI:29105"/>
    </cofactor>
    <text evidence="1">Binds 1 zinc ion per subunit.</text>
</comment>
<comment type="subunit">
    <text evidence="1">Part of the 30S ribosomal subunit. Contacts proteins S3 and S10.</text>
</comment>
<comment type="similarity">
    <text evidence="1">Belongs to the universal ribosomal protein uS14 family. Zinc-binding uS14 subfamily.</text>
</comment>
<name>RS14Z_STAAM</name>
<gene>
    <name evidence="1" type="primary">rpsZ</name>
    <name evidence="1" type="synonym">rpsN1</name>
    <name type="ordered locus">SAV2237</name>
</gene>
<proteinExistence type="inferred from homology"/>
<feature type="chain" id="PRO_0000130927" description="Small ribosomal subunit protein uS14B">
    <location>
        <begin position="1"/>
        <end position="61"/>
    </location>
</feature>
<feature type="binding site" evidence="1">
    <location>
        <position position="24"/>
    </location>
    <ligand>
        <name>Zn(2+)</name>
        <dbReference type="ChEBI" id="CHEBI:29105"/>
    </ligand>
</feature>
<feature type="binding site" evidence="1">
    <location>
        <position position="27"/>
    </location>
    <ligand>
        <name>Zn(2+)</name>
        <dbReference type="ChEBI" id="CHEBI:29105"/>
    </ligand>
</feature>
<feature type="binding site" evidence="1">
    <location>
        <position position="40"/>
    </location>
    <ligand>
        <name>Zn(2+)</name>
        <dbReference type="ChEBI" id="CHEBI:29105"/>
    </ligand>
</feature>
<feature type="binding site" evidence="1">
    <location>
        <position position="43"/>
    </location>
    <ligand>
        <name>Zn(2+)</name>
        <dbReference type="ChEBI" id="CHEBI:29105"/>
    </ligand>
</feature>